<reference key="1">
    <citation type="journal article" date="2005" name="Science">
        <title>The transcriptional landscape of the mammalian genome.</title>
        <authorList>
            <person name="Carninci P."/>
            <person name="Kasukawa T."/>
            <person name="Katayama S."/>
            <person name="Gough J."/>
            <person name="Frith M.C."/>
            <person name="Maeda N."/>
            <person name="Oyama R."/>
            <person name="Ravasi T."/>
            <person name="Lenhard B."/>
            <person name="Wells C."/>
            <person name="Kodzius R."/>
            <person name="Shimokawa K."/>
            <person name="Bajic V.B."/>
            <person name="Brenner S.E."/>
            <person name="Batalov S."/>
            <person name="Forrest A.R."/>
            <person name="Zavolan M."/>
            <person name="Davis M.J."/>
            <person name="Wilming L.G."/>
            <person name="Aidinis V."/>
            <person name="Allen J.E."/>
            <person name="Ambesi-Impiombato A."/>
            <person name="Apweiler R."/>
            <person name="Aturaliya R.N."/>
            <person name="Bailey T.L."/>
            <person name="Bansal M."/>
            <person name="Baxter L."/>
            <person name="Beisel K.W."/>
            <person name="Bersano T."/>
            <person name="Bono H."/>
            <person name="Chalk A.M."/>
            <person name="Chiu K.P."/>
            <person name="Choudhary V."/>
            <person name="Christoffels A."/>
            <person name="Clutterbuck D.R."/>
            <person name="Crowe M.L."/>
            <person name="Dalla E."/>
            <person name="Dalrymple B.P."/>
            <person name="de Bono B."/>
            <person name="Della Gatta G."/>
            <person name="di Bernardo D."/>
            <person name="Down T."/>
            <person name="Engstrom P."/>
            <person name="Fagiolini M."/>
            <person name="Faulkner G."/>
            <person name="Fletcher C.F."/>
            <person name="Fukushima T."/>
            <person name="Furuno M."/>
            <person name="Futaki S."/>
            <person name="Gariboldi M."/>
            <person name="Georgii-Hemming P."/>
            <person name="Gingeras T.R."/>
            <person name="Gojobori T."/>
            <person name="Green R.E."/>
            <person name="Gustincich S."/>
            <person name="Harbers M."/>
            <person name="Hayashi Y."/>
            <person name="Hensch T.K."/>
            <person name="Hirokawa N."/>
            <person name="Hill D."/>
            <person name="Huminiecki L."/>
            <person name="Iacono M."/>
            <person name="Ikeo K."/>
            <person name="Iwama A."/>
            <person name="Ishikawa T."/>
            <person name="Jakt M."/>
            <person name="Kanapin A."/>
            <person name="Katoh M."/>
            <person name="Kawasawa Y."/>
            <person name="Kelso J."/>
            <person name="Kitamura H."/>
            <person name="Kitano H."/>
            <person name="Kollias G."/>
            <person name="Krishnan S.P."/>
            <person name="Kruger A."/>
            <person name="Kummerfeld S.K."/>
            <person name="Kurochkin I.V."/>
            <person name="Lareau L.F."/>
            <person name="Lazarevic D."/>
            <person name="Lipovich L."/>
            <person name="Liu J."/>
            <person name="Liuni S."/>
            <person name="McWilliam S."/>
            <person name="Madan Babu M."/>
            <person name="Madera M."/>
            <person name="Marchionni L."/>
            <person name="Matsuda H."/>
            <person name="Matsuzawa S."/>
            <person name="Miki H."/>
            <person name="Mignone F."/>
            <person name="Miyake S."/>
            <person name="Morris K."/>
            <person name="Mottagui-Tabar S."/>
            <person name="Mulder N."/>
            <person name="Nakano N."/>
            <person name="Nakauchi H."/>
            <person name="Ng P."/>
            <person name="Nilsson R."/>
            <person name="Nishiguchi S."/>
            <person name="Nishikawa S."/>
            <person name="Nori F."/>
            <person name="Ohara O."/>
            <person name="Okazaki Y."/>
            <person name="Orlando V."/>
            <person name="Pang K.C."/>
            <person name="Pavan W.J."/>
            <person name="Pavesi G."/>
            <person name="Pesole G."/>
            <person name="Petrovsky N."/>
            <person name="Piazza S."/>
            <person name="Reed J."/>
            <person name="Reid J.F."/>
            <person name="Ring B.Z."/>
            <person name="Ringwald M."/>
            <person name="Rost B."/>
            <person name="Ruan Y."/>
            <person name="Salzberg S.L."/>
            <person name="Sandelin A."/>
            <person name="Schneider C."/>
            <person name="Schoenbach C."/>
            <person name="Sekiguchi K."/>
            <person name="Semple C.A."/>
            <person name="Seno S."/>
            <person name="Sessa L."/>
            <person name="Sheng Y."/>
            <person name="Shibata Y."/>
            <person name="Shimada H."/>
            <person name="Shimada K."/>
            <person name="Silva D."/>
            <person name="Sinclair B."/>
            <person name="Sperling S."/>
            <person name="Stupka E."/>
            <person name="Sugiura K."/>
            <person name="Sultana R."/>
            <person name="Takenaka Y."/>
            <person name="Taki K."/>
            <person name="Tammoja K."/>
            <person name="Tan S.L."/>
            <person name="Tang S."/>
            <person name="Taylor M.S."/>
            <person name="Tegner J."/>
            <person name="Teichmann S.A."/>
            <person name="Ueda H.R."/>
            <person name="van Nimwegen E."/>
            <person name="Verardo R."/>
            <person name="Wei C.L."/>
            <person name="Yagi K."/>
            <person name="Yamanishi H."/>
            <person name="Zabarovsky E."/>
            <person name="Zhu S."/>
            <person name="Zimmer A."/>
            <person name="Hide W."/>
            <person name="Bult C."/>
            <person name="Grimmond S.M."/>
            <person name="Teasdale R.D."/>
            <person name="Liu E.T."/>
            <person name="Brusic V."/>
            <person name="Quackenbush J."/>
            <person name="Wahlestedt C."/>
            <person name="Mattick J.S."/>
            <person name="Hume D.A."/>
            <person name="Kai C."/>
            <person name="Sasaki D."/>
            <person name="Tomaru Y."/>
            <person name="Fukuda S."/>
            <person name="Kanamori-Katayama M."/>
            <person name="Suzuki M."/>
            <person name="Aoki J."/>
            <person name="Arakawa T."/>
            <person name="Iida J."/>
            <person name="Imamura K."/>
            <person name="Itoh M."/>
            <person name="Kato T."/>
            <person name="Kawaji H."/>
            <person name="Kawagashira N."/>
            <person name="Kawashima T."/>
            <person name="Kojima M."/>
            <person name="Kondo S."/>
            <person name="Konno H."/>
            <person name="Nakano K."/>
            <person name="Ninomiya N."/>
            <person name="Nishio T."/>
            <person name="Okada M."/>
            <person name="Plessy C."/>
            <person name="Shibata K."/>
            <person name="Shiraki T."/>
            <person name="Suzuki S."/>
            <person name="Tagami M."/>
            <person name="Waki K."/>
            <person name="Watahiki A."/>
            <person name="Okamura-Oho Y."/>
            <person name="Suzuki H."/>
            <person name="Kawai J."/>
            <person name="Hayashizaki Y."/>
        </authorList>
    </citation>
    <scope>NUCLEOTIDE SEQUENCE [LARGE SCALE MRNA]</scope>
    <source>
        <strain>C57BL/6J</strain>
        <tissue>Embryo</tissue>
    </source>
</reference>
<reference key="2">
    <citation type="journal article" date="2004" name="Genome Res.">
        <title>The status, quality, and expansion of the NIH full-length cDNA project: the Mammalian Gene Collection (MGC).</title>
        <authorList>
            <consortium name="The MGC Project Team"/>
        </authorList>
    </citation>
    <scope>NUCLEOTIDE SEQUENCE [LARGE SCALE MRNA]</scope>
    <source>
        <strain>C57BL/6J</strain>
        <tissue>Brain</tissue>
    </source>
</reference>
<reference key="3">
    <citation type="journal article" date="2010" name="Cell">
        <title>A tissue-specific atlas of mouse protein phosphorylation and expression.</title>
        <authorList>
            <person name="Huttlin E.L."/>
            <person name="Jedrychowski M.P."/>
            <person name="Elias J.E."/>
            <person name="Goswami T."/>
            <person name="Rad R."/>
            <person name="Beausoleil S.A."/>
            <person name="Villen J."/>
            <person name="Haas W."/>
            <person name="Sowa M.E."/>
            <person name="Gygi S.P."/>
        </authorList>
    </citation>
    <scope>IDENTIFICATION BY MASS SPECTROMETRY [LARGE SCALE ANALYSIS]</scope>
    <source>
        <tissue>Lung</tissue>
        <tissue>Testis</tissue>
    </source>
</reference>
<protein>
    <recommendedName>
        <fullName>Protein phosphatase 1 regulatory subunit 37</fullName>
    </recommendedName>
    <alternativeName>
        <fullName>Leucine-rich repeat-containing protein 68</fullName>
    </alternativeName>
</protein>
<accession>Q8BKR5</accession>
<feature type="chain" id="PRO_0000320940" description="Protein phosphatase 1 regulatory subunit 37">
    <location>
        <begin position="1"/>
        <end position="712"/>
    </location>
</feature>
<feature type="repeat" description="LRR 1">
    <location>
        <begin position="226"/>
        <end position="246"/>
    </location>
</feature>
<feature type="repeat" description="LRR 2">
    <location>
        <begin position="254"/>
        <end position="275"/>
    </location>
</feature>
<feature type="repeat" description="LRR 3">
    <location>
        <begin position="283"/>
        <end position="303"/>
    </location>
</feature>
<feature type="repeat" description="LRR 4">
    <location>
        <begin position="312"/>
        <end position="332"/>
    </location>
</feature>
<feature type="repeat" description="LRR 5">
    <location>
        <begin position="340"/>
        <end position="360"/>
    </location>
</feature>
<feature type="region of interest" description="Disordered" evidence="4">
    <location>
        <begin position="1"/>
        <end position="47"/>
    </location>
</feature>
<feature type="region of interest" description="Disordered" evidence="4">
    <location>
        <begin position="492"/>
        <end position="680"/>
    </location>
</feature>
<feature type="compositionally biased region" description="Pro residues" evidence="4">
    <location>
        <begin position="1"/>
        <end position="12"/>
    </location>
</feature>
<feature type="compositionally biased region" description="Acidic residues" evidence="4">
    <location>
        <begin position="16"/>
        <end position="29"/>
    </location>
</feature>
<feature type="compositionally biased region" description="Acidic residues" evidence="4">
    <location>
        <begin position="514"/>
        <end position="531"/>
    </location>
</feature>
<feature type="compositionally biased region" description="Pro residues" evidence="4">
    <location>
        <begin position="605"/>
        <end position="626"/>
    </location>
</feature>
<feature type="compositionally biased region" description="Polar residues" evidence="4">
    <location>
        <begin position="639"/>
        <end position="651"/>
    </location>
</feature>
<feature type="modified residue" description="Phosphoserine" evidence="3">
    <location>
        <position position="56"/>
    </location>
</feature>
<feature type="modified residue" description="Phosphoserine" evidence="2">
    <location>
        <position position="62"/>
    </location>
</feature>
<feature type="modified residue" description="Phosphoserine" evidence="3">
    <location>
        <position position="583"/>
    </location>
</feature>
<comment type="function">
    <text evidence="1">Inhibits phosphatase activity of protein phosphatase 1 (PP1) complexes.</text>
</comment>
<comment type="subunit">
    <text evidence="1">Interacts with PPP1CA.</text>
</comment>
<comment type="similarity">
    <text evidence="5">Belongs to the PPP1R37 family.</text>
</comment>
<sequence length="712" mass="77574">MEIPPQEAPPGPGADADADAEAETEEASAEAESPTGTSPPADGRLKAAAKRVTFPSDEDIVSGAVEPKDPWRHAQNVTVDEVISAYRQACQKLNCRQIPKLLRQLQEFTDLEQRINCLDLKGEKLDYKTCEALEEVFKRLQFKVVDLEQTNLDEDGASALFDMIEYYESATHLNISFNKHIGTRGWQAAAHMMRKTSCLQYLDARNTPLLDHSAPFVARALRIRSSLAVLHLENASLSGRPLMLLATALKMNMNLRELYLADNKLNGLQDSAQLGNLLKFNCSLQILDLRNNHVLDSGLAYICEGLKEQRKGLVTLVLWNNQLTHTGMAFLGMALPHTQSLETLNLGHNPIGNEGVRNLKNGLISNRSVLRLGLASTKLTCEGAVAVAEFIAESPRLLRLDLRENEIKTGGLMALSLALKVNHSLLRLDLDREPKKEPVKSFIETQKALLAEIQNGCKRNFVLVREREEKQQLQLSASMPEITITAPQPLEESGELPAVGSQNGAPRPGPGPDSDSDSDSDREEQEEEEEDQRNQQRDEGGNDQSSLASCPALIPSTDSLGPGDKSPPSSPSSPTEQRISVSSPGRGHKVFVVTRVESPPERPEPPVPPTFVSSPPPSPPSPPASPPSQTMDTQDPESSEAQPQLEPSQAGQPLPNGLKPEFALALPPEPPPGLEAKGGSCSLEHALHRSQGVSKLEELLLEASQEAPRDTL</sequence>
<proteinExistence type="evidence at protein level"/>
<evidence type="ECO:0000250" key="1"/>
<evidence type="ECO:0000250" key="2">
    <source>
        <dbReference type="UniProtKB" id="B2RYF1"/>
    </source>
</evidence>
<evidence type="ECO:0000250" key="3">
    <source>
        <dbReference type="UniProtKB" id="O75864"/>
    </source>
</evidence>
<evidence type="ECO:0000256" key="4">
    <source>
        <dbReference type="SAM" id="MobiDB-lite"/>
    </source>
</evidence>
<evidence type="ECO:0000305" key="5"/>
<name>PPR37_MOUSE</name>
<gene>
    <name type="primary">Ppp1r37</name>
    <name type="synonym">Lrrc68</name>
</gene>
<dbReference type="EMBL" id="AK050946">
    <property type="protein sequence ID" value="BAC34471.1"/>
    <property type="molecule type" value="mRNA"/>
</dbReference>
<dbReference type="EMBL" id="BC070402">
    <property type="protein sequence ID" value="AAH70402.1"/>
    <property type="molecule type" value="mRNA"/>
</dbReference>
<dbReference type="CCDS" id="CCDS20906.1"/>
<dbReference type="RefSeq" id="NP_954600.1">
    <property type="nucleotide sequence ID" value="NM_199149.3"/>
</dbReference>
<dbReference type="SMR" id="Q8BKR5"/>
<dbReference type="BioGRID" id="231330">
    <property type="interactions" value="1"/>
</dbReference>
<dbReference type="FunCoup" id="Q8BKR5">
    <property type="interactions" value="99"/>
</dbReference>
<dbReference type="IntAct" id="Q8BKR5">
    <property type="interactions" value="1"/>
</dbReference>
<dbReference type="STRING" id="10090.ENSMUSP00000060233"/>
<dbReference type="GlyGen" id="Q8BKR5">
    <property type="glycosylation" value="2 sites, 2 N-linked glycans (2 sites)"/>
</dbReference>
<dbReference type="iPTMnet" id="Q8BKR5"/>
<dbReference type="PhosphoSitePlus" id="Q8BKR5"/>
<dbReference type="jPOST" id="Q8BKR5"/>
<dbReference type="PaxDb" id="10090-ENSMUSP00000060233"/>
<dbReference type="PeptideAtlas" id="Q8BKR5"/>
<dbReference type="ProteomicsDB" id="289878"/>
<dbReference type="Pumba" id="Q8BKR5"/>
<dbReference type="Antibodypedia" id="49146">
    <property type="antibodies" value="50 antibodies from 12 providers"/>
</dbReference>
<dbReference type="DNASU" id="232947"/>
<dbReference type="Ensembl" id="ENSMUST00000058444.10">
    <property type="protein sequence ID" value="ENSMUSP00000060233.9"/>
    <property type="gene ID" value="ENSMUSG00000051403.10"/>
</dbReference>
<dbReference type="GeneID" id="232947"/>
<dbReference type="KEGG" id="mmu:232947"/>
<dbReference type="UCSC" id="uc009fmh.1">
    <property type="organism name" value="mouse"/>
</dbReference>
<dbReference type="AGR" id="MGI:2687042"/>
<dbReference type="CTD" id="284352"/>
<dbReference type="MGI" id="MGI:2687042">
    <property type="gene designation" value="Ppp1r37"/>
</dbReference>
<dbReference type="VEuPathDB" id="HostDB:ENSMUSG00000051403"/>
<dbReference type="eggNOG" id="KOG1908">
    <property type="taxonomic scope" value="Eukaryota"/>
</dbReference>
<dbReference type="GeneTree" id="ENSGT00940000157454"/>
<dbReference type="HOGENOM" id="CLU_014302_0_0_1"/>
<dbReference type="InParanoid" id="Q8BKR5"/>
<dbReference type="OMA" id="EHELRCP"/>
<dbReference type="OrthoDB" id="84948at9989"/>
<dbReference type="PhylomeDB" id="Q8BKR5"/>
<dbReference type="TreeFam" id="TF328391"/>
<dbReference type="BioGRID-ORCS" id="232947">
    <property type="hits" value="2 hits in 76 CRISPR screens"/>
</dbReference>
<dbReference type="ChiTaRS" id="Ppp1r37">
    <property type="organism name" value="mouse"/>
</dbReference>
<dbReference type="PRO" id="PR:Q8BKR5"/>
<dbReference type="Proteomes" id="UP000000589">
    <property type="component" value="Chromosome 7"/>
</dbReference>
<dbReference type="RNAct" id="Q8BKR5">
    <property type="molecule type" value="protein"/>
</dbReference>
<dbReference type="Bgee" id="ENSMUSG00000051403">
    <property type="expression patterns" value="Expressed in humerus cartilage element and 248 other cell types or tissues"/>
</dbReference>
<dbReference type="GO" id="GO:0004864">
    <property type="term" value="F:protein phosphatase inhibitor activity"/>
    <property type="evidence" value="ECO:0007669"/>
    <property type="project" value="UniProtKB-KW"/>
</dbReference>
<dbReference type="CDD" id="cd00116">
    <property type="entry name" value="LRR_RI"/>
    <property type="match status" value="1"/>
</dbReference>
<dbReference type="FunFam" id="3.80.10.10:FF:000324">
    <property type="entry name" value="Protein phosphatase 1 regulatory subunit 37"/>
    <property type="match status" value="1"/>
</dbReference>
<dbReference type="Gene3D" id="3.80.10.10">
    <property type="entry name" value="Ribonuclease Inhibitor"/>
    <property type="match status" value="1"/>
</dbReference>
<dbReference type="InterPro" id="IPR001611">
    <property type="entry name" value="Leu-rich_rpt"/>
</dbReference>
<dbReference type="InterPro" id="IPR032675">
    <property type="entry name" value="LRR_dom_sf"/>
</dbReference>
<dbReference type="InterPro" id="IPR051279">
    <property type="entry name" value="PP1-Reg/Actin-Interact_Protein"/>
</dbReference>
<dbReference type="PANTHER" id="PTHR24112">
    <property type="entry name" value="LEUCINE-RICH REPEAT, ISOFORM F-RELATED"/>
    <property type="match status" value="1"/>
</dbReference>
<dbReference type="PANTHER" id="PTHR24112:SF9">
    <property type="entry name" value="PROTEIN PHOSPHATASE 1 REGULATORY SUBUNIT 37"/>
    <property type="match status" value="1"/>
</dbReference>
<dbReference type="Pfam" id="PF13516">
    <property type="entry name" value="LRR_6"/>
    <property type="match status" value="3"/>
</dbReference>
<dbReference type="SMART" id="SM00368">
    <property type="entry name" value="LRR_RI"/>
    <property type="match status" value="7"/>
</dbReference>
<dbReference type="SUPFAM" id="SSF52047">
    <property type="entry name" value="RNI-like"/>
    <property type="match status" value="1"/>
</dbReference>
<dbReference type="PROSITE" id="PS51450">
    <property type="entry name" value="LRR"/>
    <property type="match status" value="5"/>
</dbReference>
<keyword id="KW-0433">Leucine-rich repeat</keyword>
<keyword id="KW-0597">Phosphoprotein</keyword>
<keyword id="KW-0650">Protein phosphatase inhibitor</keyword>
<keyword id="KW-1185">Reference proteome</keyword>
<keyword id="KW-0677">Repeat</keyword>
<organism>
    <name type="scientific">Mus musculus</name>
    <name type="common">Mouse</name>
    <dbReference type="NCBI Taxonomy" id="10090"/>
    <lineage>
        <taxon>Eukaryota</taxon>
        <taxon>Metazoa</taxon>
        <taxon>Chordata</taxon>
        <taxon>Craniata</taxon>
        <taxon>Vertebrata</taxon>
        <taxon>Euteleostomi</taxon>
        <taxon>Mammalia</taxon>
        <taxon>Eutheria</taxon>
        <taxon>Euarchontoglires</taxon>
        <taxon>Glires</taxon>
        <taxon>Rodentia</taxon>
        <taxon>Myomorpha</taxon>
        <taxon>Muroidea</taxon>
        <taxon>Muridae</taxon>
        <taxon>Murinae</taxon>
        <taxon>Mus</taxon>
        <taxon>Mus</taxon>
    </lineage>
</organism>